<gene>
    <name type="primary">eIF1A</name>
    <name type="ordered locus">SSO2375</name>
</gene>
<sequence length="108" mass="12518">MPKKDRAQEAPSRDVPRPEEGQTICVVKKMLGGDHLIVLCMDGKERLARIPGKIRKKMWMREGDVVLVGIWDFQPNRCDILYKYGNDEIKRLVNENIISREVIDQLRG</sequence>
<organism>
    <name type="scientific">Saccharolobus solfataricus (strain ATCC 35092 / DSM 1617 / JCM 11322 / P2)</name>
    <name type="common">Sulfolobus solfataricus</name>
    <dbReference type="NCBI Taxonomy" id="273057"/>
    <lineage>
        <taxon>Archaea</taxon>
        <taxon>Thermoproteota</taxon>
        <taxon>Thermoprotei</taxon>
        <taxon>Sulfolobales</taxon>
        <taxon>Sulfolobaceae</taxon>
        <taxon>Saccharolobus</taxon>
    </lineage>
</organism>
<evidence type="ECO:0000250" key="1"/>
<evidence type="ECO:0000305" key="2"/>
<dbReference type="EMBL" id="AE006641">
    <property type="protein sequence ID" value="AAK42526.1"/>
    <property type="molecule type" value="Genomic_DNA"/>
</dbReference>
<dbReference type="PIR" id="G90408">
    <property type="entry name" value="G90408"/>
</dbReference>
<dbReference type="RefSeq" id="WP_009989464.1">
    <property type="nucleotide sequence ID" value="NC_002754.1"/>
</dbReference>
<dbReference type="SMR" id="Q97W62"/>
<dbReference type="FunCoup" id="Q97W62">
    <property type="interactions" value="212"/>
</dbReference>
<dbReference type="STRING" id="273057.SSO2375"/>
<dbReference type="PaxDb" id="273057-SSO2375"/>
<dbReference type="EnsemblBacteria" id="AAK42526">
    <property type="protein sequence ID" value="AAK42526"/>
    <property type="gene ID" value="SSO2375"/>
</dbReference>
<dbReference type="KEGG" id="sso:SSO2375"/>
<dbReference type="PATRIC" id="fig|273057.12.peg.2460"/>
<dbReference type="eggNOG" id="arCOG01179">
    <property type="taxonomic scope" value="Archaea"/>
</dbReference>
<dbReference type="HOGENOM" id="CLU_109098_1_2_2"/>
<dbReference type="InParanoid" id="Q97W62"/>
<dbReference type="PhylomeDB" id="Q97W62"/>
<dbReference type="Proteomes" id="UP000001974">
    <property type="component" value="Chromosome"/>
</dbReference>
<dbReference type="GO" id="GO:0005737">
    <property type="term" value="C:cytoplasm"/>
    <property type="evidence" value="ECO:0000318"/>
    <property type="project" value="GO_Central"/>
</dbReference>
<dbReference type="GO" id="GO:0003723">
    <property type="term" value="F:RNA binding"/>
    <property type="evidence" value="ECO:0007669"/>
    <property type="project" value="InterPro"/>
</dbReference>
<dbReference type="GO" id="GO:0003743">
    <property type="term" value="F:translation initiation factor activity"/>
    <property type="evidence" value="ECO:0000318"/>
    <property type="project" value="GO_Central"/>
</dbReference>
<dbReference type="GO" id="GO:0006413">
    <property type="term" value="P:translational initiation"/>
    <property type="evidence" value="ECO:0000318"/>
    <property type="project" value="GO_Central"/>
</dbReference>
<dbReference type="CDD" id="cd05793">
    <property type="entry name" value="S1_IF1A"/>
    <property type="match status" value="1"/>
</dbReference>
<dbReference type="Gene3D" id="2.40.50.140">
    <property type="entry name" value="Nucleic acid-binding proteins"/>
    <property type="match status" value="1"/>
</dbReference>
<dbReference type="HAMAP" id="MF_00216">
    <property type="entry name" value="aIF_1A"/>
    <property type="match status" value="1"/>
</dbReference>
<dbReference type="InterPro" id="IPR012340">
    <property type="entry name" value="NA-bd_OB-fold"/>
</dbReference>
<dbReference type="InterPro" id="IPR006196">
    <property type="entry name" value="RNA-binding_domain_S1_IF1"/>
</dbReference>
<dbReference type="InterPro" id="IPR001253">
    <property type="entry name" value="TIF_eIF-1A"/>
</dbReference>
<dbReference type="InterPro" id="IPR018104">
    <property type="entry name" value="TIF_eIF-1A_CS"/>
</dbReference>
<dbReference type="NCBIfam" id="TIGR00523">
    <property type="entry name" value="eIF-1A"/>
    <property type="match status" value="1"/>
</dbReference>
<dbReference type="NCBIfam" id="NF003082">
    <property type="entry name" value="PRK04012.1-1"/>
    <property type="match status" value="1"/>
</dbReference>
<dbReference type="NCBIfam" id="NF003084">
    <property type="entry name" value="PRK04012.1-3"/>
    <property type="match status" value="1"/>
</dbReference>
<dbReference type="NCBIfam" id="NF003085">
    <property type="entry name" value="PRK04012.1-5"/>
    <property type="match status" value="1"/>
</dbReference>
<dbReference type="PANTHER" id="PTHR21668">
    <property type="entry name" value="EIF-1A"/>
    <property type="match status" value="1"/>
</dbReference>
<dbReference type="Pfam" id="PF01176">
    <property type="entry name" value="eIF-1a"/>
    <property type="match status" value="1"/>
</dbReference>
<dbReference type="SMART" id="SM00652">
    <property type="entry name" value="eIF1a"/>
    <property type="match status" value="1"/>
</dbReference>
<dbReference type="SUPFAM" id="SSF50249">
    <property type="entry name" value="Nucleic acid-binding proteins"/>
    <property type="match status" value="1"/>
</dbReference>
<dbReference type="PROSITE" id="PS01262">
    <property type="entry name" value="IF1A"/>
    <property type="match status" value="1"/>
</dbReference>
<dbReference type="PROSITE" id="PS50832">
    <property type="entry name" value="S1_IF1_TYPE"/>
    <property type="match status" value="1"/>
</dbReference>
<comment type="function">
    <text evidence="1">Seems to be required for maximal rate of protein biosynthesis. Enhances ribosome dissociation into subunits and stabilizes the binding of the initiator Met-tRNA(I) to 40 S ribosomal subunits (By similarity).</text>
</comment>
<comment type="similarity">
    <text evidence="2">Belongs to the eIF-1A family.</text>
</comment>
<protein>
    <recommendedName>
        <fullName>Translation initiation factor 1A</fullName>
        <shortName>aIF-1A</shortName>
    </recommendedName>
</protein>
<reference key="1">
    <citation type="journal article" date="2001" name="Proc. Natl. Acad. Sci. U.S.A.">
        <title>The complete genome of the crenarchaeon Sulfolobus solfataricus P2.</title>
        <authorList>
            <person name="She Q."/>
            <person name="Singh R.K."/>
            <person name="Confalonieri F."/>
            <person name="Zivanovic Y."/>
            <person name="Allard G."/>
            <person name="Awayez M.J."/>
            <person name="Chan-Weiher C.C.-Y."/>
            <person name="Clausen I.G."/>
            <person name="Curtis B.A."/>
            <person name="De Moors A."/>
            <person name="Erauso G."/>
            <person name="Fletcher C."/>
            <person name="Gordon P.M.K."/>
            <person name="Heikamp-de Jong I."/>
            <person name="Jeffries A.C."/>
            <person name="Kozera C.J."/>
            <person name="Medina N."/>
            <person name="Peng X."/>
            <person name="Thi-Ngoc H.P."/>
            <person name="Redder P."/>
            <person name="Schenk M.E."/>
            <person name="Theriault C."/>
            <person name="Tolstrup N."/>
            <person name="Charlebois R.L."/>
            <person name="Doolittle W.F."/>
            <person name="Duguet M."/>
            <person name="Gaasterland T."/>
            <person name="Garrett R.A."/>
            <person name="Ragan M.A."/>
            <person name="Sensen C.W."/>
            <person name="Van der Oost J."/>
        </authorList>
    </citation>
    <scope>NUCLEOTIDE SEQUENCE [LARGE SCALE GENOMIC DNA]</scope>
    <source>
        <strain>ATCC 35092 / DSM 1617 / JCM 11322 / P2</strain>
    </source>
</reference>
<proteinExistence type="inferred from homology"/>
<name>IF1A_SACS2</name>
<keyword id="KW-0396">Initiation factor</keyword>
<keyword id="KW-0648">Protein biosynthesis</keyword>
<keyword id="KW-1185">Reference proteome</keyword>
<accession>Q97W62</accession>
<feature type="chain" id="PRO_0000145134" description="Translation initiation factor 1A">
    <location>
        <begin position="1"/>
        <end position="108"/>
    </location>
</feature>
<feature type="domain" description="S1-like">
    <location>
        <begin position="11"/>
        <end position="85"/>
    </location>
</feature>